<proteinExistence type="inferred from homology"/>
<dbReference type="EC" id="2.8.1.6" evidence="1"/>
<dbReference type="EMBL" id="AE017283">
    <property type="protein sequence ID" value="AAT83158.1"/>
    <property type="status" value="ALT_INIT"/>
    <property type="molecule type" value="Genomic_DNA"/>
</dbReference>
<dbReference type="SMR" id="Q6A7V7"/>
<dbReference type="EnsemblBacteria" id="AAT83158">
    <property type="protein sequence ID" value="AAT83158"/>
    <property type="gene ID" value="PPA1407"/>
</dbReference>
<dbReference type="KEGG" id="pac:PPA1407"/>
<dbReference type="eggNOG" id="COG0502">
    <property type="taxonomic scope" value="Bacteria"/>
</dbReference>
<dbReference type="HOGENOM" id="CLU_033172_2_1_11"/>
<dbReference type="UniPathway" id="UPA00078">
    <property type="reaction ID" value="UER00162"/>
</dbReference>
<dbReference type="Proteomes" id="UP000000603">
    <property type="component" value="Chromosome"/>
</dbReference>
<dbReference type="GO" id="GO:0051537">
    <property type="term" value="F:2 iron, 2 sulfur cluster binding"/>
    <property type="evidence" value="ECO:0007669"/>
    <property type="project" value="UniProtKB-KW"/>
</dbReference>
<dbReference type="GO" id="GO:0051539">
    <property type="term" value="F:4 iron, 4 sulfur cluster binding"/>
    <property type="evidence" value="ECO:0007669"/>
    <property type="project" value="UniProtKB-KW"/>
</dbReference>
<dbReference type="GO" id="GO:0004076">
    <property type="term" value="F:biotin synthase activity"/>
    <property type="evidence" value="ECO:0007669"/>
    <property type="project" value="UniProtKB-UniRule"/>
</dbReference>
<dbReference type="GO" id="GO:0005506">
    <property type="term" value="F:iron ion binding"/>
    <property type="evidence" value="ECO:0007669"/>
    <property type="project" value="UniProtKB-UniRule"/>
</dbReference>
<dbReference type="GO" id="GO:0009102">
    <property type="term" value="P:biotin biosynthetic process"/>
    <property type="evidence" value="ECO:0007669"/>
    <property type="project" value="UniProtKB-UniRule"/>
</dbReference>
<dbReference type="CDD" id="cd01335">
    <property type="entry name" value="Radical_SAM"/>
    <property type="match status" value="1"/>
</dbReference>
<dbReference type="FunFam" id="3.20.20.70:FF:000026">
    <property type="entry name" value="Biotin synthase"/>
    <property type="match status" value="1"/>
</dbReference>
<dbReference type="Gene3D" id="3.20.20.70">
    <property type="entry name" value="Aldolase class I"/>
    <property type="match status" value="1"/>
</dbReference>
<dbReference type="HAMAP" id="MF_01694">
    <property type="entry name" value="BioB"/>
    <property type="match status" value="1"/>
</dbReference>
<dbReference type="InterPro" id="IPR013785">
    <property type="entry name" value="Aldolase_TIM"/>
</dbReference>
<dbReference type="InterPro" id="IPR010722">
    <property type="entry name" value="BATS_dom"/>
</dbReference>
<dbReference type="InterPro" id="IPR002684">
    <property type="entry name" value="Biotin_synth/BioAB"/>
</dbReference>
<dbReference type="InterPro" id="IPR024177">
    <property type="entry name" value="Biotin_synthase"/>
</dbReference>
<dbReference type="InterPro" id="IPR006638">
    <property type="entry name" value="Elp3/MiaA/NifB-like_rSAM"/>
</dbReference>
<dbReference type="InterPro" id="IPR007197">
    <property type="entry name" value="rSAM"/>
</dbReference>
<dbReference type="NCBIfam" id="TIGR00433">
    <property type="entry name" value="bioB"/>
    <property type="match status" value="1"/>
</dbReference>
<dbReference type="PANTHER" id="PTHR22976">
    <property type="entry name" value="BIOTIN SYNTHASE"/>
    <property type="match status" value="1"/>
</dbReference>
<dbReference type="PANTHER" id="PTHR22976:SF2">
    <property type="entry name" value="BIOTIN SYNTHASE, MITOCHONDRIAL"/>
    <property type="match status" value="1"/>
</dbReference>
<dbReference type="Pfam" id="PF06968">
    <property type="entry name" value="BATS"/>
    <property type="match status" value="1"/>
</dbReference>
<dbReference type="Pfam" id="PF04055">
    <property type="entry name" value="Radical_SAM"/>
    <property type="match status" value="1"/>
</dbReference>
<dbReference type="PIRSF" id="PIRSF001619">
    <property type="entry name" value="Biotin_synth"/>
    <property type="match status" value="1"/>
</dbReference>
<dbReference type="SFLD" id="SFLDG01278">
    <property type="entry name" value="biotin_synthase_like"/>
    <property type="match status" value="1"/>
</dbReference>
<dbReference type="SFLD" id="SFLDS00029">
    <property type="entry name" value="Radical_SAM"/>
    <property type="match status" value="1"/>
</dbReference>
<dbReference type="SMART" id="SM00876">
    <property type="entry name" value="BATS"/>
    <property type="match status" value="1"/>
</dbReference>
<dbReference type="SMART" id="SM00729">
    <property type="entry name" value="Elp3"/>
    <property type="match status" value="1"/>
</dbReference>
<dbReference type="SUPFAM" id="SSF102114">
    <property type="entry name" value="Radical SAM enzymes"/>
    <property type="match status" value="1"/>
</dbReference>
<dbReference type="PROSITE" id="PS51918">
    <property type="entry name" value="RADICAL_SAM"/>
    <property type="match status" value="1"/>
</dbReference>
<gene>
    <name evidence="1" type="primary">bioB</name>
    <name type="ordered locus">PPA1407</name>
</gene>
<organism>
    <name type="scientific">Cutibacterium acnes (strain DSM 16379 / KPA171202)</name>
    <name type="common">Propionibacterium acnes</name>
    <dbReference type="NCBI Taxonomy" id="267747"/>
    <lineage>
        <taxon>Bacteria</taxon>
        <taxon>Bacillati</taxon>
        <taxon>Actinomycetota</taxon>
        <taxon>Actinomycetes</taxon>
        <taxon>Propionibacteriales</taxon>
        <taxon>Propionibacteriaceae</taxon>
        <taxon>Cutibacterium</taxon>
    </lineage>
</organism>
<feature type="chain" id="PRO_0000381535" description="Biotin synthase">
    <location>
        <begin position="1"/>
        <end position="358"/>
    </location>
</feature>
<feature type="domain" description="Radical SAM core" evidence="2">
    <location>
        <begin position="44"/>
        <end position="272"/>
    </location>
</feature>
<feature type="binding site" evidence="1">
    <location>
        <position position="59"/>
    </location>
    <ligand>
        <name>[4Fe-4S] cluster</name>
        <dbReference type="ChEBI" id="CHEBI:49883"/>
        <note>4Fe-4S-S-AdoMet</note>
    </ligand>
</feature>
<feature type="binding site" evidence="1">
    <location>
        <position position="63"/>
    </location>
    <ligand>
        <name>[4Fe-4S] cluster</name>
        <dbReference type="ChEBI" id="CHEBI:49883"/>
        <note>4Fe-4S-S-AdoMet</note>
    </ligand>
</feature>
<feature type="binding site" evidence="1">
    <location>
        <position position="66"/>
    </location>
    <ligand>
        <name>[4Fe-4S] cluster</name>
        <dbReference type="ChEBI" id="CHEBI:49883"/>
        <note>4Fe-4S-S-AdoMet</note>
    </ligand>
</feature>
<feature type="binding site" evidence="1">
    <location>
        <position position="103"/>
    </location>
    <ligand>
        <name>[2Fe-2S] cluster</name>
        <dbReference type="ChEBI" id="CHEBI:190135"/>
    </ligand>
</feature>
<feature type="binding site" evidence="1">
    <location>
        <position position="136"/>
    </location>
    <ligand>
        <name>[2Fe-2S] cluster</name>
        <dbReference type="ChEBI" id="CHEBI:190135"/>
    </ligand>
</feature>
<feature type="binding site" evidence="1">
    <location>
        <position position="196"/>
    </location>
    <ligand>
        <name>[2Fe-2S] cluster</name>
        <dbReference type="ChEBI" id="CHEBI:190135"/>
    </ligand>
</feature>
<feature type="binding site" evidence="1">
    <location>
        <position position="267"/>
    </location>
    <ligand>
        <name>[2Fe-2S] cluster</name>
        <dbReference type="ChEBI" id="CHEBI:190135"/>
    </ligand>
</feature>
<sequence>MTERGLRGESITREEALEILRSSDDELMSIIAAAGKVRRHFFDNRVRLNYLVNLKSGLCPEDCSYCSQRLGSRAEIMKYSWADPQKVHDAVEAGIAGGARRVCMVASGHGPSRRDVERVNGMVRSLKADHPDVEVCVCLGFVDDEKAASIKEAGADAYNHNANTARSHYGKICSTHSYEDRMDTVEVLKRNGLSPCSGVIAGMGETDEEFVDVIFDLRKHGVDSVPVNFLLPFEGTPLAGGAQHITPQWCLKRLAMVRFAHPDSEVRAAAGREQHIRTMQPLALEVVNSIFLGDYLTSEGAAGAADLQMIEDGGFIPEGADGQPMVHTDVNSHHSANLPVNAVPIRHRGIGTEVPANA</sequence>
<accession>Q6A7V7</accession>
<protein>
    <recommendedName>
        <fullName evidence="1">Biotin synthase</fullName>
        <ecNumber evidence="1">2.8.1.6</ecNumber>
    </recommendedName>
</protein>
<reference key="1">
    <citation type="journal article" date="2004" name="Science">
        <title>The complete genome sequence of Propionibacterium acnes, a commensal of human skin.</title>
        <authorList>
            <person name="Brueggemann H."/>
            <person name="Henne A."/>
            <person name="Hoster F."/>
            <person name="Liesegang H."/>
            <person name="Wiezer A."/>
            <person name="Strittmatter A."/>
            <person name="Hujer S."/>
            <person name="Duerre P."/>
            <person name="Gottschalk G."/>
        </authorList>
    </citation>
    <scope>NUCLEOTIDE SEQUENCE [LARGE SCALE GENOMIC DNA]</scope>
    <source>
        <strain>DSM 16379 / KPA171202</strain>
    </source>
</reference>
<keyword id="KW-0001">2Fe-2S</keyword>
<keyword id="KW-0004">4Fe-4S</keyword>
<keyword id="KW-0093">Biotin biosynthesis</keyword>
<keyword id="KW-0408">Iron</keyword>
<keyword id="KW-0411">Iron-sulfur</keyword>
<keyword id="KW-0479">Metal-binding</keyword>
<keyword id="KW-0949">S-adenosyl-L-methionine</keyword>
<keyword id="KW-0808">Transferase</keyword>
<comment type="function">
    <text evidence="1">Catalyzes the conversion of dethiobiotin (DTB) to biotin by the insertion of a sulfur atom into dethiobiotin via a radical-based mechanism.</text>
</comment>
<comment type="catalytic activity">
    <reaction evidence="1">
        <text>(4R,5S)-dethiobiotin + (sulfur carrier)-SH + 2 reduced [2Fe-2S]-[ferredoxin] + 2 S-adenosyl-L-methionine = (sulfur carrier)-H + biotin + 2 5'-deoxyadenosine + 2 L-methionine + 2 oxidized [2Fe-2S]-[ferredoxin]</text>
        <dbReference type="Rhea" id="RHEA:22060"/>
        <dbReference type="Rhea" id="RHEA-COMP:10000"/>
        <dbReference type="Rhea" id="RHEA-COMP:10001"/>
        <dbReference type="Rhea" id="RHEA-COMP:14737"/>
        <dbReference type="Rhea" id="RHEA-COMP:14739"/>
        <dbReference type="ChEBI" id="CHEBI:17319"/>
        <dbReference type="ChEBI" id="CHEBI:29917"/>
        <dbReference type="ChEBI" id="CHEBI:33737"/>
        <dbReference type="ChEBI" id="CHEBI:33738"/>
        <dbReference type="ChEBI" id="CHEBI:57586"/>
        <dbReference type="ChEBI" id="CHEBI:57844"/>
        <dbReference type="ChEBI" id="CHEBI:59789"/>
        <dbReference type="ChEBI" id="CHEBI:64428"/>
        <dbReference type="ChEBI" id="CHEBI:149473"/>
        <dbReference type="EC" id="2.8.1.6"/>
    </reaction>
</comment>
<comment type="cofactor">
    <cofactor evidence="1">
        <name>[4Fe-4S] cluster</name>
        <dbReference type="ChEBI" id="CHEBI:49883"/>
    </cofactor>
    <text evidence="1">Binds 1 [4Fe-4S] cluster. The cluster is coordinated with 3 cysteines and an exchangeable S-adenosyl-L-methionine.</text>
</comment>
<comment type="cofactor">
    <cofactor evidence="1">
        <name>[2Fe-2S] cluster</name>
        <dbReference type="ChEBI" id="CHEBI:190135"/>
    </cofactor>
    <text evidence="1">Binds 1 [2Fe-2S] cluster. The cluster is coordinated with 3 cysteines and 1 arginine.</text>
</comment>
<comment type="pathway">
    <text evidence="1">Cofactor biosynthesis; biotin biosynthesis; biotin from 7,8-diaminononanoate: step 2/2.</text>
</comment>
<comment type="subunit">
    <text evidence="1">Homodimer.</text>
</comment>
<comment type="similarity">
    <text evidence="1">Belongs to the radical SAM superfamily. Biotin synthase family.</text>
</comment>
<comment type="sequence caution" evidence="3">
    <conflict type="erroneous initiation">
        <sequence resource="EMBL-CDS" id="AAT83158"/>
    </conflict>
</comment>
<name>BIOB_CUTAK</name>
<evidence type="ECO:0000255" key="1">
    <source>
        <dbReference type="HAMAP-Rule" id="MF_01694"/>
    </source>
</evidence>
<evidence type="ECO:0000255" key="2">
    <source>
        <dbReference type="PROSITE-ProRule" id="PRU01266"/>
    </source>
</evidence>
<evidence type="ECO:0000305" key="3"/>